<name>PILS3_ARATH</name>
<protein>
    <recommendedName>
        <fullName evidence="3">Protein PIN-LIKES 3</fullName>
    </recommendedName>
    <alternativeName>
        <fullName evidence="3">Auxin efflux carrier-like protein 3</fullName>
    </alternativeName>
</protein>
<feature type="chain" id="PRO_0000436498" description="Protein PIN-LIKES 3">
    <location>
        <begin position="1"/>
        <end position="390"/>
    </location>
</feature>
<feature type="topological domain" description="Lumenal" evidence="5">
    <location>
        <begin position="1"/>
        <end position="14"/>
    </location>
</feature>
<feature type="transmembrane region" description="Helical" evidence="1">
    <location>
        <begin position="15"/>
        <end position="35"/>
    </location>
</feature>
<feature type="topological domain" description="Cytoplasmic" evidence="5">
    <location>
        <begin position="36"/>
        <end position="43"/>
    </location>
</feature>
<feature type="transmembrane region" description="Helical" evidence="1">
    <location>
        <begin position="44"/>
        <end position="61"/>
    </location>
</feature>
<feature type="topological domain" description="Lumenal" evidence="5">
    <location>
        <begin position="62"/>
        <end position="76"/>
    </location>
</feature>
<feature type="transmembrane region" description="Helical" evidence="1">
    <location>
        <begin position="77"/>
        <end position="97"/>
    </location>
</feature>
<feature type="topological domain" description="Cytoplasmic" evidence="5">
    <location>
        <begin position="98"/>
        <end position="107"/>
    </location>
</feature>
<feature type="transmembrane region" description="Helical" evidence="1">
    <location>
        <begin position="108"/>
        <end position="128"/>
    </location>
</feature>
<feature type="topological domain" description="Lumenal" evidence="5">
    <location>
        <begin position="129"/>
        <end position="144"/>
    </location>
</feature>
<feature type="transmembrane region" description="Helical" evidence="1">
    <location>
        <begin position="145"/>
        <end position="165"/>
    </location>
</feature>
<feature type="topological domain" description="Cytoplasmic" evidence="5">
    <location>
        <begin position="166"/>
        <end position="227"/>
    </location>
</feature>
<feature type="transmembrane region" description="Helical" evidence="1">
    <location>
        <begin position="228"/>
        <end position="248"/>
    </location>
</feature>
<feature type="topological domain" description="Lumenal" evidence="5">
    <location>
        <begin position="249"/>
        <end position="265"/>
    </location>
</feature>
<feature type="transmembrane region" description="Helical" evidence="1">
    <location>
        <begin position="266"/>
        <end position="286"/>
    </location>
</feature>
<feature type="topological domain" description="Cytoplasmic" evidence="5">
    <location>
        <begin position="287"/>
        <end position="297"/>
    </location>
</feature>
<feature type="transmembrane region" description="Helical" evidence="1">
    <location>
        <begin position="298"/>
        <end position="318"/>
    </location>
</feature>
<feature type="topological domain" description="Lumenal" evidence="5">
    <location>
        <begin position="319"/>
        <end position="331"/>
    </location>
</feature>
<feature type="transmembrane region" description="Helical" evidence="1">
    <location>
        <begin position="332"/>
        <end position="352"/>
    </location>
</feature>
<feature type="topological domain" description="Cytoplasmic" evidence="5">
    <location>
        <begin position="353"/>
        <end position="364"/>
    </location>
</feature>
<feature type="transmembrane region" description="Helical" evidence="1">
    <location>
        <begin position="365"/>
        <end position="385"/>
    </location>
</feature>
<feature type="topological domain" description="Lumenal" evidence="5">
    <location>
        <begin position="386"/>
        <end position="390"/>
    </location>
</feature>
<feature type="splice variant" id="VSP_058378" description="In isoform 2.">
    <original>A</original>
    <variation>AYLVTYQ</variation>
    <location>
        <position position="155"/>
    </location>
</feature>
<feature type="splice variant" id="VSP_058379" description="In isoform 2.">
    <original>AGRWEKVKRRLVSLSQKVNLKTIFAPSTIAAMIALVIGLITPLR</original>
    <variation>VSSHMHMISNYSFIKVGSDCVYMTGWEVGKSQAEIGFTVTKSQP</variation>
    <location>
        <begin position="206"/>
        <end position="249"/>
    </location>
</feature>
<feature type="splice variant" id="VSP_058380" description="In isoform 2.">
    <location>
        <begin position="250"/>
        <end position="390"/>
    </location>
</feature>
<sequence length="390" mass="42632">MVKLLELFITSSKPVVEILLITSVGFYMALDGVNLLGHDARKYLNNIVFYVFSPSLIGSRLADSVTYESLVKMWFMPVNVLLTFIIGSLLGWIVIVITKPPSHLRGLILGCCAAGNLGNMPLIIIPAVCKEKGGPFGDPESCQKYGMGYVALSMAMGSIYIWTYVYNLMRVLSNSPVETPPSVESNYDSYKVPLISSKEEENNQKAGRWEKVKRRLVSLSQKVNLKTIFAPSTIAAMIALVIGLITPLRKLIIGTEAPLRVLQDSVTLVGDGAVPAMTMIIGGNLLKGLRSSGMKMSSIIGVLVARYVLLPMSGVLIVRGAYKLDLVTSEPLYQFVLLLQYAVPPAMNLGTITQLFGTGESECSVIMLWTYSLASIALTVWPTFFMWLVA</sequence>
<organism>
    <name type="scientific">Arabidopsis thaliana</name>
    <name type="common">Mouse-ear cress</name>
    <dbReference type="NCBI Taxonomy" id="3702"/>
    <lineage>
        <taxon>Eukaryota</taxon>
        <taxon>Viridiplantae</taxon>
        <taxon>Streptophyta</taxon>
        <taxon>Embryophyta</taxon>
        <taxon>Tracheophyta</taxon>
        <taxon>Spermatophyta</taxon>
        <taxon>Magnoliopsida</taxon>
        <taxon>eudicotyledons</taxon>
        <taxon>Gunneridae</taxon>
        <taxon>Pentapetalae</taxon>
        <taxon>rosids</taxon>
        <taxon>malvids</taxon>
        <taxon>Brassicales</taxon>
        <taxon>Brassicaceae</taxon>
        <taxon>Camelineae</taxon>
        <taxon>Arabidopsis</taxon>
    </lineage>
</organism>
<comment type="function">
    <text evidence="2">Involved in cellular auxin homeostasis by regulating auxin metabolism. Regulates intracellular auxin accumulation at the endoplasmic reticulum and thus auxin availability for nuclear auxin signaling.</text>
</comment>
<comment type="subcellular location">
    <subcellularLocation>
        <location evidence="2">Endoplasmic reticulum membrane</location>
        <topology evidence="4">Multi-pass membrane protein</topology>
    </subcellularLocation>
</comment>
<comment type="alternative products">
    <event type="alternative splicing"/>
    <isoform>
        <id>Q9C9K5-1</id>
        <name>1</name>
        <sequence type="displayed"/>
    </isoform>
    <isoform>
        <id>Q9C9K5-2</id>
        <name>2</name>
        <sequence type="described" ref="VSP_058378 VSP_058379 VSP_058380"/>
    </isoform>
</comment>
<comment type="tissue specificity">
    <text evidence="2">Expressed in seedlings, rosette and cauline leaves, flowers and siliques.</text>
</comment>
<comment type="induction">
    <text evidence="2">Up-regulated by auxin application.</text>
</comment>
<comment type="similarity">
    <text evidence="4">Belongs to the auxin efflux carrier (TC 2.A.69.2) family.</text>
</comment>
<evidence type="ECO:0000255" key="1"/>
<evidence type="ECO:0000269" key="2">
    <source>
    </source>
</evidence>
<evidence type="ECO:0000303" key="3">
    <source>
    </source>
</evidence>
<evidence type="ECO:0000305" key="4"/>
<evidence type="ECO:0000305" key="5">
    <source>
    </source>
</evidence>
<evidence type="ECO:0000312" key="6">
    <source>
        <dbReference type="Araport" id="AT1G76520"/>
    </source>
</evidence>
<evidence type="ECO:0000312" key="7">
    <source>
        <dbReference type="EMBL" id="AAG51955.1"/>
    </source>
</evidence>
<proteinExistence type="evidence at transcript level"/>
<gene>
    <name type="primary">PILS3</name>
    <name evidence="6" type="ordered locus">At1g76520</name>
    <name evidence="7" type="ORF">F14G6.12</name>
</gene>
<reference key="1">
    <citation type="journal article" date="2000" name="Nature">
        <title>Sequence and analysis of chromosome 1 of the plant Arabidopsis thaliana.</title>
        <authorList>
            <person name="Theologis A."/>
            <person name="Ecker J.R."/>
            <person name="Palm C.J."/>
            <person name="Federspiel N.A."/>
            <person name="Kaul S."/>
            <person name="White O."/>
            <person name="Alonso J."/>
            <person name="Altafi H."/>
            <person name="Araujo R."/>
            <person name="Bowman C.L."/>
            <person name="Brooks S.Y."/>
            <person name="Buehler E."/>
            <person name="Chan A."/>
            <person name="Chao Q."/>
            <person name="Chen H."/>
            <person name="Cheuk R.F."/>
            <person name="Chin C.W."/>
            <person name="Chung M.K."/>
            <person name="Conn L."/>
            <person name="Conway A.B."/>
            <person name="Conway A.R."/>
            <person name="Creasy T.H."/>
            <person name="Dewar K."/>
            <person name="Dunn P."/>
            <person name="Etgu P."/>
            <person name="Feldblyum T.V."/>
            <person name="Feng J.-D."/>
            <person name="Fong B."/>
            <person name="Fujii C.Y."/>
            <person name="Gill J.E."/>
            <person name="Goldsmith A.D."/>
            <person name="Haas B."/>
            <person name="Hansen N.F."/>
            <person name="Hughes B."/>
            <person name="Huizar L."/>
            <person name="Hunter J.L."/>
            <person name="Jenkins J."/>
            <person name="Johnson-Hopson C."/>
            <person name="Khan S."/>
            <person name="Khaykin E."/>
            <person name="Kim C.J."/>
            <person name="Koo H.L."/>
            <person name="Kremenetskaia I."/>
            <person name="Kurtz D.B."/>
            <person name="Kwan A."/>
            <person name="Lam B."/>
            <person name="Langin-Hooper S."/>
            <person name="Lee A."/>
            <person name="Lee J.M."/>
            <person name="Lenz C.A."/>
            <person name="Li J.H."/>
            <person name="Li Y.-P."/>
            <person name="Lin X."/>
            <person name="Liu S.X."/>
            <person name="Liu Z.A."/>
            <person name="Luros J.S."/>
            <person name="Maiti R."/>
            <person name="Marziali A."/>
            <person name="Militscher J."/>
            <person name="Miranda M."/>
            <person name="Nguyen M."/>
            <person name="Nierman W.C."/>
            <person name="Osborne B.I."/>
            <person name="Pai G."/>
            <person name="Peterson J."/>
            <person name="Pham P.K."/>
            <person name="Rizzo M."/>
            <person name="Rooney T."/>
            <person name="Rowley D."/>
            <person name="Sakano H."/>
            <person name="Salzberg S.L."/>
            <person name="Schwartz J.R."/>
            <person name="Shinn P."/>
            <person name="Southwick A.M."/>
            <person name="Sun H."/>
            <person name="Tallon L.J."/>
            <person name="Tambunga G."/>
            <person name="Toriumi M.J."/>
            <person name="Town C.D."/>
            <person name="Utterback T."/>
            <person name="Van Aken S."/>
            <person name="Vaysberg M."/>
            <person name="Vysotskaia V.S."/>
            <person name="Walker M."/>
            <person name="Wu D."/>
            <person name="Yu G."/>
            <person name="Fraser C.M."/>
            <person name="Venter J.C."/>
            <person name="Davis R.W."/>
        </authorList>
    </citation>
    <scope>NUCLEOTIDE SEQUENCE [LARGE SCALE GENOMIC DNA]</scope>
    <source>
        <strain>cv. Columbia</strain>
    </source>
</reference>
<reference key="2">
    <citation type="journal article" date="2017" name="Plant J.">
        <title>Araport11: a complete reannotation of the Arabidopsis thaliana reference genome.</title>
        <authorList>
            <person name="Cheng C.Y."/>
            <person name="Krishnakumar V."/>
            <person name="Chan A.P."/>
            <person name="Thibaud-Nissen F."/>
            <person name="Schobel S."/>
            <person name="Town C.D."/>
        </authorList>
    </citation>
    <scope>GENOME REANNOTATION</scope>
    <source>
        <strain>cv. Columbia</strain>
    </source>
</reference>
<reference key="3">
    <citation type="journal article" date="2003" name="Science">
        <title>Empirical analysis of transcriptional activity in the Arabidopsis genome.</title>
        <authorList>
            <person name="Yamada K."/>
            <person name="Lim J."/>
            <person name="Dale J.M."/>
            <person name="Chen H."/>
            <person name="Shinn P."/>
            <person name="Palm C.J."/>
            <person name="Southwick A.M."/>
            <person name="Wu H.C."/>
            <person name="Kim C.J."/>
            <person name="Nguyen M."/>
            <person name="Pham P.K."/>
            <person name="Cheuk R.F."/>
            <person name="Karlin-Newmann G."/>
            <person name="Liu S.X."/>
            <person name="Lam B."/>
            <person name="Sakano H."/>
            <person name="Wu T."/>
            <person name="Yu G."/>
            <person name="Miranda M."/>
            <person name="Quach H.L."/>
            <person name="Tripp M."/>
            <person name="Chang C.H."/>
            <person name="Lee J.M."/>
            <person name="Toriumi M.J."/>
            <person name="Chan M.M."/>
            <person name="Tang C.C."/>
            <person name="Onodera C.S."/>
            <person name="Deng J.M."/>
            <person name="Akiyama K."/>
            <person name="Ansari Y."/>
            <person name="Arakawa T."/>
            <person name="Banh J."/>
            <person name="Banno F."/>
            <person name="Bowser L."/>
            <person name="Brooks S.Y."/>
            <person name="Carninci P."/>
            <person name="Chao Q."/>
            <person name="Choy N."/>
            <person name="Enju A."/>
            <person name="Goldsmith A.D."/>
            <person name="Gurjal M."/>
            <person name="Hansen N.F."/>
            <person name="Hayashizaki Y."/>
            <person name="Johnson-Hopson C."/>
            <person name="Hsuan V.W."/>
            <person name="Iida K."/>
            <person name="Karnes M."/>
            <person name="Khan S."/>
            <person name="Koesema E."/>
            <person name="Ishida J."/>
            <person name="Jiang P.X."/>
            <person name="Jones T."/>
            <person name="Kawai J."/>
            <person name="Kamiya A."/>
            <person name="Meyers C."/>
            <person name="Nakajima M."/>
            <person name="Narusaka M."/>
            <person name="Seki M."/>
            <person name="Sakurai T."/>
            <person name="Satou M."/>
            <person name="Tamse R."/>
            <person name="Vaysberg M."/>
            <person name="Wallender E.K."/>
            <person name="Wong C."/>
            <person name="Yamamura Y."/>
            <person name="Yuan S."/>
            <person name="Shinozaki K."/>
            <person name="Davis R.W."/>
            <person name="Theologis A."/>
            <person name="Ecker J.R."/>
        </authorList>
    </citation>
    <scope>NUCLEOTIDE SEQUENCE [LARGE SCALE MRNA] (ISOFORM 1)</scope>
    <source>
        <strain>cv. Columbia</strain>
    </source>
</reference>
<reference key="4">
    <citation type="submission" date="2006-07" db="EMBL/GenBank/DDBJ databases">
        <title>Large-scale analysis of RIKEN Arabidopsis full-length (RAFL) cDNAs.</title>
        <authorList>
            <person name="Totoki Y."/>
            <person name="Seki M."/>
            <person name="Ishida J."/>
            <person name="Nakajima M."/>
            <person name="Enju A."/>
            <person name="Kamiya A."/>
            <person name="Narusaka M."/>
            <person name="Shin-i T."/>
            <person name="Nakagawa M."/>
            <person name="Sakamoto N."/>
            <person name="Oishi K."/>
            <person name="Kohara Y."/>
            <person name="Kobayashi M."/>
            <person name="Toyoda A."/>
            <person name="Sakaki Y."/>
            <person name="Sakurai T."/>
            <person name="Iida K."/>
            <person name="Akiyama K."/>
            <person name="Satou M."/>
            <person name="Toyoda T."/>
            <person name="Konagaya A."/>
            <person name="Carninci P."/>
            <person name="Kawai J."/>
            <person name="Hayashizaki Y."/>
            <person name="Shinozaki K."/>
        </authorList>
    </citation>
    <scope>NUCLEOTIDE SEQUENCE [LARGE SCALE MRNA] (ISOFORM 1)</scope>
    <source>
        <strain>cv. Columbia</strain>
    </source>
</reference>
<reference key="5">
    <citation type="journal article" date="2009" name="DNA Res.">
        <title>Analysis of multiple occurrences of alternative splicing events in Arabidopsis thaliana using novel sequenced full-length cDNAs.</title>
        <authorList>
            <person name="Iida K."/>
            <person name="Fukami-Kobayashi K."/>
            <person name="Toyoda A."/>
            <person name="Sakaki Y."/>
            <person name="Kobayashi M."/>
            <person name="Seki M."/>
            <person name="Shinozaki K."/>
        </authorList>
    </citation>
    <scope>NUCLEOTIDE SEQUENCE [LARGE SCALE MRNA] (ISOFORM 2)</scope>
    <source>
        <strain>cv. Columbia</strain>
    </source>
</reference>
<reference key="6">
    <citation type="journal article" date="2012" name="Nature">
        <title>A novel putative auxin carrier family regulates intracellular auxin homeostasis in plants.</title>
        <authorList>
            <person name="Barbez E."/>
            <person name="Kubes M."/>
            <person name="Rolcik J."/>
            <person name="Beziat C."/>
            <person name="Pencik A."/>
            <person name="Wang B."/>
            <person name="Rosquete M.R."/>
            <person name="Zhu J."/>
            <person name="Dobrev P.I."/>
            <person name="Lee Y."/>
            <person name="Zazimalova E."/>
            <person name="Petrasek J."/>
            <person name="Geisler M."/>
            <person name="Friml J."/>
            <person name="Kleine-Vehn J."/>
        </authorList>
    </citation>
    <scope>FUNCTION</scope>
    <scope>TISSUE SPECIFICITY</scope>
    <scope>INDUCTION BY AUXIN</scope>
    <scope>GENE FAMILY</scope>
    <scope>NOMENCLATURE</scope>
    <scope>SUBCELLULAR LOCATION</scope>
</reference>
<reference key="7">
    <citation type="journal article" date="2012" name="Front. Plant Sci.">
        <title>Evolution and structural diversification of PILS putative auxin carriers in plants.</title>
        <authorList>
            <person name="Feraru E."/>
            <person name="Vosolsobe S."/>
            <person name="Feraru M.I."/>
            <person name="Petrasek J."/>
            <person name="Kleine-Vehn J."/>
        </authorList>
    </citation>
    <scope>GENE FAMILY</scope>
    <scope>NOMENCLATURE</scope>
</reference>
<dbReference type="EMBL" id="AC015450">
    <property type="protein sequence ID" value="AAG51955.1"/>
    <property type="molecule type" value="Genomic_DNA"/>
</dbReference>
<dbReference type="EMBL" id="CP002684">
    <property type="protein sequence ID" value="AEE35854.1"/>
    <property type="molecule type" value="Genomic_DNA"/>
</dbReference>
<dbReference type="EMBL" id="CP002684">
    <property type="protein sequence ID" value="AEE35855.1"/>
    <property type="molecule type" value="Genomic_DNA"/>
</dbReference>
<dbReference type="EMBL" id="AY099725">
    <property type="protein sequence ID" value="AAM20576.1"/>
    <property type="molecule type" value="mRNA"/>
</dbReference>
<dbReference type="EMBL" id="BT000295">
    <property type="protein sequence ID" value="AAN15614.1"/>
    <property type="molecule type" value="mRNA"/>
</dbReference>
<dbReference type="EMBL" id="AK226892">
    <property type="protein sequence ID" value="BAE98969.1"/>
    <property type="molecule type" value="mRNA"/>
</dbReference>
<dbReference type="EMBL" id="AK318926">
    <property type="protein sequence ID" value="BAH57041.1"/>
    <property type="molecule type" value="mRNA"/>
</dbReference>
<dbReference type="PIR" id="B96793">
    <property type="entry name" value="B96793"/>
</dbReference>
<dbReference type="RefSeq" id="NP_565133.1">
    <molecule id="Q9C9K5-1"/>
    <property type="nucleotide sequence ID" value="NM_106302.5"/>
</dbReference>
<dbReference type="RefSeq" id="NP_849892.1">
    <molecule id="Q9C9K5-1"/>
    <property type="nucleotide sequence ID" value="NM_179561.4"/>
</dbReference>
<dbReference type="SMR" id="Q9C9K5"/>
<dbReference type="FunCoup" id="Q9C9K5">
    <property type="interactions" value="135"/>
</dbReference>
<dbReference type="IntAct" id="Q9C9K5">
    <property type="interactions" value="1"/>
</dbReference>
<dbReference type="STRING" id="3702.Q9C9K5"/>
<dbReference type="iPTMnet" id="Q9C9K5"/>
<dbReference type="PaxDb" id="3702-AT1G76520.2"/>
<dbReference type="ProteomicsDB" id="235111">
    <molecule id="Q9C9K5-1"/>
</dbReference>
<dbReference type="EnsemblPlants" id="AT1G76520.1">
    <molecule id="Q9C9K5-1"/>
    <property type="protein sequence ID" value="AT1G76520.1"/>
    <property type="gene ID" value="AT1G76520"/>
</dbReference>
<dbReference type="EnsemblPlants" id="AT1G76520.2">
    <molecule id="Q9C9K5-1"/>
    <property type="protein sequence ID" value="AT1G76520.2"/>
    <property type="gene ID" value="AT1G76520"/>
</dbReference>
<dbReference type="GeneID" id="843985"/>
<dbReference type="Gramene" id="AT1G76520.1">
    <molecule id="Q9C9K5-1"/>
    <property type="protein sequence ID" value="AT1G76520.1"/>
    <property type="gene ID" value="AT1G76520"/>
</dbReference>
<dbReference type="Gramene" id="AT1G76520.2">
    <molecule id="Q9C9K5-1"/>
    <property type="protein sequence ID" value="AT1G76520.2"/>
    <property type="gene ID" value="AT1G76520"/>
</dbReference>
<dbReference type="KEGG" id="ath:AT1G76520"/>
<dbReference type="Araport" id="AT1G76520"/>
<dbReference type="TAIR" id="AT1G76520">
    <property type="gene designation" value="PILS3"/>
</dbReference>
<dbReference type="eggNOG" id="KOG2722">
    <property type="taxonomic scope" value="Eukaryota"/>
</dbReference>
<dbReference type="HOGENOM" id="CLU_044945_0_0_1"/>
<dbReference type="InParanoid" id="Q9C9K5"/>
<dbReference type="OMA" id="MGSIYIW"/>
<dbReference type="PhylomeDB" id="Q9C9K5"/>
<dbReference type="PRO" id="PR:Q9C9K5"/>
<dbReference type="Proteomes" id="UP000006548">
    <property type="component" value="Chromosome 1"/>
</dbReference>
<dbReference type="ExpressionAtlas" id="Q9C9K5">
    <property type="expression patterns" value="baseline and differential"/>
</dbReference>
<dbReference type="GO" id="GO:0005789">
    <property type="term" value="C:endoplasmic reticulum membrane"/>
    <property type="evidence" value="ECO:0000314"/>
    <property type="project" value="UniProtKB"/>
</dbReference>
<dbReference type="GO" id="GO:0005739">
    <property type="term" value="C:mitochondrion"/>
    <property type="evidence" value="ECO:0007005"/>
    <property type="project" value="TAIR"/>
</dbReference>
<dbReference type="GO" id="GO:0009734">
    <property type="term" value="P:auxin-activated signaling pathway"/>
    <property type="evidence" value="ECO:0007669"/>
    <property type="project" value="UniProtKB-KW"/>
</dbReference>
<dbReference type="GO" id="GO:0080162">
    <property type="term" value="P:endoplasmic reticulum to cytosol auxin transport"/>
    <property type="evidence" value="ECO:0007669"/>
    <property type="project" value="InterPro"/>
</dbReference>
<dbReference type="GO" id="GO:0009733">
    <property type="term" value="P:response to auxin"/>
    <property type="evidence" value="ECO:0000270"/>
    <property type="project" value="UniProtKB"/>
</dbReference>
<dbReference type="InterPro" id="IPR004776">
    <property type="entry name" value="Mem_transp_PIN-like"/>
</dbReference>
<dbReference type="InterPro" id="IPR045033">
    <property type="entry name" value="PILS1/3/4/5/7"/>
</dbReference>
<dbReference type="PANTHER" id="PTHR31651">
    <property type="match status" value="1"/>
</dbReference>
<dbReference type="PANTHER" id="PTHR31651:SF19">
    <property type="entry name" value="PROTEIN PIN-LIKES 3"/>
    <property type="match status" value="1"/>
</dbReference>
<dbReference type="Pfam" id="PF03547">
    <property type="entry name" value="Mem_trans"/>
    <property type="match status" value="1"/>
</dbReference>
<keyword id="KW-0025">Alternative splicing</keyword>
<keyword id="KW-0927">Auxin signaling pathway</keyword>
<keyword id="KW-0256">Endoplasmic reticulum</keyword>
<keyword id="KW-0472">Membrane</keyword>
<keyword id="KW-1185">Reference proteome</keyword>
<keyword id="KW-0812">Transmembrane</keyword>
<keyword id="KW-1133">Transmembrane helix</keyword>
<keyword id="KW-0813">Transport</keyword>
<accession>Q9C9K5</accession>
<accession>C0Z2W2</accession>